<protein>
    <recommendedName>
        <fullName evidence="1">Small ribosomal subunit protein uS17</fullName>
    </recommendedName>
    <alternativeName>
        <fullName evidence="2">30S ribosomal protein S17</fullName>
    </alternativeName>
</protein>
<gene>
    <name evidence="1" type="primary">rpsQ</name>
    <name type="ordered locus">A1C_05060</name>
</gene>
<feature type="chain" id="PRO_1000055009" description="Small ribosomal subunit protein uS17">
    <location>
        <begin position="1"/>
        <end position="77"/>
    </location>
</feature>
<proteinExistence type="inferred from homology"/>
<dbReference type="EMBL" id="CP000847">
    <property type="protein sequence ID" value="ABV75266.1"/>
    <property type="molecule type" value="Genomic_DNA"/>
</dbReference>
<dbReference type="RefSeq" id="WP_012149896.1">
    <property type="nucleotide sequence ID" value="NC_009881.1"/>
</dbReference>
<dbReference type="SMR" id="A8GPE1"/>
<dbReference type="STRING" id="293614.A1C_05060"/>
<dbReference type="KEGG" id="rak:A1C_05060"/>
<dbReference type="eggNOG" id="COG0186">
    <property type="taxonomic scope" value="Bacteria"/>
</dbReference>
<dbReference type="HOGENOM" id="CLU_073626_1_1_5"/>
<dbReference type="Proteomes" id="UP000006830">
    <property type="component" value="Chromosome"/>
</dbReference>
<dbReference type="GO" id="GO:0022627">
    <property type="term" value="C:cytosolic small ribosomal subunit"/>
    <property type="evidence" value="ECO:0007669"/>
    <property type="project" value="TreeGrafter"/>
</dbReference>
<dbReference type="GO" id="GO:0019843">
    <property type="term" value="F:rRNA binding"/>
    <property type="evidence" value="ECO:0007669"/>
    <property type="project" value="UniProtKB-UniRule"/>
</dbReference>
<dbReference type="GO" id="GO:0003735">
    <property type="term" value="F:structural constituent of ribosome"/>
    <property type="evidence" value="ECO:0007669"/>
    <property type="project" value="InterPro"/>
</dbReference>
<dbReference type="GO" id="GO:0006412">
    <property type="term" value="P:translation"/>
    <property type="evidence" value="ECO:0007669"/>
    <property type="project" value="UniProtKB-UniRule"/>
</dbReference>
<dbReference type="CDD" id="cd00364">
    <property type="entry name" value="Ribosomal_uS17"/>
    <property type="match status" value="1"/>
</dbReference>
<dbReference type="Gene3D" id="2.40.50.140">
    <property type="entry name" value="Nucleic acid-binding proteins"/>
    <property type="match status" value="1"/>
</dbReference>
<dbReference type="HAMAP" id="MF_01345_B">
    <property type="entry name" value="Ribosomal_uS17_B"/>
    <property type="match status" value="1"/>
</dbReference>
<dbReference type="InterPro" id="IPR012340">
    <property type="entry name" value="NA-bd_OB-fold"/>
</dbReference>
<dbReference type="InterPro" id="IPR000266">
    <property type="entry name" value="Ribosomal_uS17"/>
</dbReference>
<dbReference type="InterPro" id="IPR019984">
    <property type="entry name" value="Ribosomal_uS17_bact/chlr"/>
</dbReference>
<dbReference type="InterPro" id="IPR019979">
    <property type="entry name" value="Ribosomal_uS17_CS"/>
</dbReference>
<dbReference type="NCBIfam" id="NF004123">
    <property type="entry name" value="PRK05610.1"/>
    <property type="match status" value="1"/>
</dbReference>
<dbReference type="NCBIfam" id="TIGR03635">
    <property type="entry name" value="uS17_bact"/>
    <property type="match status" value="1"/>
</dbReference>
<dbReference type="PANTHER" id="PTHR10744">
    <property type="entry name" value="40S RIBOSOMAL PROTEIN S11 FAMILY MEMBER"/>
    <property type="match status" value="1"/>
</dbReference>
<dbReference type="PANTHER" id="PTHR10744:SF1">
    <property type="entry name" value="SMALL RIBOSOMAL SUBUNIT PROTEIN US17M"/>
    <property type="match status" value="1"/>
</dbReference>
<dbReference type="Pfam" id="PF00366">
    <property type="entry name" value="Ribosomal_S17"/>
    <property type="match status" value="1"/>
</dbReference>
<dbReference type="PRINTS" id="PR00973">
    <property type="entry name" value="RIBOSOMALS17"/>
</dbReference>
<dbReference type="SUPFAM" id="SSF50249">
    <property type="entry name" value="Nucleic acid-binding proteins"/>
    <property type="match status" value="1"/>
</dbReference>
<dbReference type="PROSITE" id="PS00056">
    <property type="entry name" value="RIBOSOMAL_S17"/>
    <property type="match status" value="1"/>
</dbReference>
<evidence type="ECO:0000255" key="1">
    <source>
        <dbReference type="HAMAP-Rule" id="MF_01345"/>
    </source>
</evidence>
<evidence type="ECO:0000305" key="2"/>
<sequence length="77" mass="8860">MPRRVLQGVVISSKADKTVTVKVERKFKHPIYKKFVKVSKKYAAHDSENKYQEGDKVSIIESRPISKTKTWIVVNGE</sequence>
<keyword id="KW-0687">Ribonucleoprotein</keyword>
<keyword id="KW-0689">Ribosomal protein</keyword>
<keyword id="KW-0694">RNA-binding</keyword>
<keyword id="KW-0699">rRNA-binding</keyword>
<reference key="1">
    <citation type="submission" date="2007-09" db="EMBL/GenBank/DDBJ databases">
        <title>Complete genome sequence of Rickettsia akari.</title>
        <authorList>
            <person name="Madan A."/>
            <person name="Fahey J."/>
            <person name="Helton E."/>
            <person name="Ketteman M."/>
            <person name="Madan A."/>
            <person name="Rodrigues S."/>
            <person name="Sanchez A."/>
            <person name="Whiting M."/>
            <person name="Dasch G."/>
            <person name="Eremeeva M."/>
        </authorList>
    </citation>
    <scope>NUCLEOTIDE SEQUENCE [LARGE SCALE GENOMIC DNA]</scope>
    <source>
        <strain>Hartford</strain>
    </source>
</reference>
<accession>A8GPE1</accession>
<name>RS17_RICAH</name>
<comment type="function">
    <text evidence="1">One of the primary rRNA binding proteins, it binds specifically to the 5'-end of 16S ribosomal RNA.</text>
</comment>
<comment type="subunit">
    <text evidence="1">Part of the 30S ribosomal subunit.</text>
</comment>
<comment type="similarity">
    <text evidence="1">Belongs to the universal ribosomal protein uS17 family.</text>
</comment>
<organism>
    <name type="scientific">Rickettsia akari (strain Hartford)</name>
    <dbReference type="NCBI Taxonomy" id="293614"/>
    <lineage>
        <taxon>Bacteria</taxon>
        <taxon>Pseudomonadati</taxon>
        <taxon>Pseudomonadota</taxon>
        <taxon>Alphaproteobacteria</taxon>
        <taxon>Rickettsiales</taxon>
        <taxon>Rickettsiaceae</taxon>
        <taxon>Rickettsieae</taxon>
        <taxon>Rickettsia</taxon>
        <taxon>spotted fever group</taxon>
    </lineage>
</organism>